<comment type="subcellular location">
    <subcellularLocation>
        <location evidence="3">Membrane</location>
        <topology evidence="3">Multi-pass membrane protein</topology>
    </subcellularLocation>
</comment>
<comment type="similarity">
    <text evidence="3">Belongs to the ST7 family.</text>
</comment>
<evidence type="ECO:0000255" key="1"/>
<evidence type="ECO:0000256" key="2">
    <source>
        <dbReference type="SAM" id="MobiDB-lite"/>
    </source>
</evidence>
<evidence type="ECO:0000305" key="3"/>
<gene>
    <name type="ORF">CG3634</name>
</gene>
<reference key="1">
    <citation type="journal article" date="2000" name="Science">
        <title>The genome sequence of Drosophila melanogaster.</title>
        <authorList>
            <person name="Adams M.D."/>
            <person name="Celniker S.E."/>
            <person name="Holt R.A."/>
            <person name="Evans C.A."/>
            <person name="Gocayne J.D."/>
            <person name="Amanatides P.G."/>
            <person name="Scherer S.E."/>
            <person name="Li P.W."/>
            <person name="Hoskins R.A."/>
            <person name="Galle R.F."/>
            <person name="George R.A."/>
            <person name="Lewis S.E."/>
            <person name="Richards S."/>
            <person name="Ashburner M."/>
            <person name="Henderson S.N."/>
            <person name="Sutton G.G."/>
            <person name="Wortman J.R."/>
            <person name="Yandell M.D."/>
            <person name="Zhang Q."/>
            <person name="Chen L.X."/>
            <person name="Brandon R.C."/>
            <person name="Rogers Y.-H.C."/>
            <person name="Blazej R.G."/>
            <person name="Champe M."/>
            <person name="Pfeiffer B.D."/>
            <person name="Wan K.H."/>
            <person name="Doyle C."/>
            <person name="Baxter E.G."/>
            <person name="Helt G."/>
            <person name="Nelson C.R."/>
            <person name="Miklos G.L.G."/>
            <person name="Abril J.F."/>
            <person name="Agbayani A."/>
            <person name="An H.-J."/>
            <person name="Andrews-Pfannkoch C."/>
            <person name="Baldwin D."/>
            <person name="Ballew R.M."/>
            <person name="Basu A."/>
            <person name="Baxendale J."/>
            <person name="Bayraktaroglu L."/>
            <person name="Beasley E.M."/>
            <person name="Beeson K.Y."/>
            <person name="Benos P.V."/>
            <person name="Berman B.P."/>
            <person name="Bhandari D."/>
            <person name="Bolshakov S."/>
            <person name="Borkova D."/>
            <person name="Botchan M.R."/>
            <person name="Bouck J."/>
            <person name="Brokstein P."/>
            <person name="Brottier P."/>
            <person name="Burtis K.C."/>
            <person name="Busam D.A."/>
            <person name="Butler H."/>
            <person name="Cadieu E."/>
            <person name="Center A."/>
            <person name="Chandra I."/>
            <person name="Cherry J.M."/>
            <person name="Cawley S."/>
            <person name="Dahlke C."/>
            <person name="Davenport L.B."/>
            <person name="Davies P."/>
            <person name="de Pablos B."/>
            <person name="Delcher A."/>
            <person name="Deng Z."/>
            <person name="Mays A.D."/>
            <person name="Dew I."/>
            <person name="Dietz S.M."/>
            <person name="Dodson K."/>
            <person name="Doup L.E."/>
            <person name="Downes M."/>
            <person name="Dugan-Rocha S."/>
            <person name="Dunkov B.C."/>
            <person name="Dunn P."/>
            <person name="Durbin K.J."/>
            <person name="Evangelista C.C."/>
            <person name="Ferraz C."/>
            <person name="Ferriera S."/>
            <person name="Fleischmann W."/>
            <person name="Fosler C."/>
            <person name="Gabrielian A.E."/>
            <person name="Garg N.S."/>
            <person name="Gelbart W.M."/>
            <person name="Glasser K."/>
            <person name="Glodek A."/>
            <person name="Gong F."/>
            <person name="Gorrell J.H."/>
            <person name="Gu Z."/>
            <person name="Guan P."/>
            <person name="Harris M."/>
            <person name="Harris N.L."/>
            <person name="Harvey D.A."/>
            <person name="Heiman T.J."/>
            <person name="Hernandez J.R."/>
            <person name="Houck J."/>
            <person name="Hostin D."/>
            <person name="Houston K.A."/>
            <person name="Howland T.J."/>
            <person name="Wei M.-H."/>
            <person name="Ibegwam C."/>
            <person name="Jalali M."/>
            <person name="Kalush F."/>
            <person name="Karpen G.H."/>
            <person name="Ke Z."/>
            <person name="Kennison J.A."/>
            <person name="Ketchum K.A."/>
            <person name="Kimmel B.E."/>
            <person name="Kodira C.D."/>
            <person name="Kraft C.L."/>
            <person name="Kravitz S."/>
            <person name="Kulp D."/>
            <person name="Lai Z."/>
            <person name="Lasko P."/>
            <person name="Lei Y."/>
            <person name="Levitsky A.A."/>
            <person name="Li J.H."/>
            <person name="Li Z."/>
            <person name="Liang Y."/>
            <person name="Lin X."/>
            <person name="Liu X."/>
            <person name="Mattei B."/>
            <person name="McIntosh T.C."/>
            <person name="McLeod M.P."/>
            <person name="McPherson D."/>
            <person name="Merkulov G."/>
            <person name="Milshina N.V."/>
            <person name="Mobarry C."/>
            <person name="Morris J."/>
            <person name="Moshrefi A."/>
            <person name="Mount S.M."/>
            <person name="Moy M."/>
            <person name="Murphy B."/>
            <person name="Murphy L."/>
            <person name="Muzny D.M."/>
            <person name="Nelson D.L."/>
            <person name="Nelson D.R."/>
            <person name="Nelson K.A."/>
            <person name="Nixon K."/>
            <person name="Nusskern D.R."/>
            <person name="Pacleb J.M."/>
            <person name="Palazzolo M."/>
            <person name="Pittman G.S."/>
            <person name="Pan S."/>
            <person name="Pollard J."/>
            <person name="Puri V."/>
            <person name="Reese M.G."/>
            <person name="Reinert K."/>
            <person name="Remington K."/>
            <person name="Saunders R.D.C."/>
            <person name="Scheeler F."/>
            <person name="Shen H."/>
            <person name="Shue B.C."/>
            <person name="Siden-Kiamos I."/>
            <person name="Simpson M."/>
            <person name="Skupski M.P."/>
            <person name="Smith T.J."/>
            <person name="Spier E."/>
            <person name="Spradling A.C."/>
            <person name="Stapleton M."/>
            <person name="Strong R."/>
            <person name="Sun E."/>
            <person name="Svirskas R."/>
            <person name="Tector C."/>
            <person name="Turner R."/>
            <person name="Venter E."/>
            <person name="Wang A.H."/>
            <person name="Wang X."/>
            <person name="Wang Z.-Y."/>
            <person name="Wassarman D.A."/>
            <person name="Weinstock G.M."/>
            <person name="Weissenbach J."/>
            <person name="Williams S.M."/>
            <person name="Woodage T."/>
            <person name="Worley K.C."/>
            <person name="Wu D."/>
            <person name="Yang S."/>
            <person name="Yao Q.A."/>
            <person name="Ye J."/>
            <person name="Yeh R.-F."/>
            <person name="Zaveri J.S."/>
            <person name="Zhan M."/>
            <person name="Zhang G."/>
            <person name="Zhao Q."/>
            <person name="Zheng L."/>
            <person name="Zheng X.H."/>
            <person name="Zhong F.N."/>
            <person name="Zhong W."/>
            <person name="Zhou X."/>
            <person name="Zhu S.C."/>
            <person name="Zhu X."/>
            <person name="Smith H.O."/>
            <person name="Gibbs R.A."/>
            <person name="Myers E.W."/>
            <person name="Rubin G.M."/>
            <person name="Venter J.C."/>
        </authorList>
    </citation>
    <scope>NUCLEOTIDE SEQUENCE [LARGE SCALE GENOMIC DNA]</scope>
    <source>
        <strain>Berkeley</strain>
    </source>
</reference>
<reference key="2">
    <citation type="journal article" date="2002" name="Genome Biol.">
        <title>Annotation of the Drosophila melanogaster euchromatic genome: a systematic review.</title>
        <authorList>
            <person name="Misra S."/>
            <person name="Crosby M.A."/>
            <person name="Mungall C.J."/>
            <person name="Matthews B.B."/>
            <person name="Campbell K.S."/>
            <person name="Hradecky P."/>
            <person name="Huang Y."/>
            <person name="Kaminker J.S."/>
            <person name="Millburn G.H."/>
            <person name="Prochnik S.E."/>
            <person name="Smith C.D."/>
            <person name="Tupy J.L."/>
            <person name="Whitfield E.J."/>
            <person name="Bayraktaroglu L."/>
            <person name="Berman B.P."/>
            <person name="Bettencourt B.R."/>
            <person name="Celniker S.E."/>
            <person name="de Grey A.D.N.J."/>
            <person name="Drysdale R.A."/>
            <person name="Harris N.L."/>
            <person name="Richter J."/>
            <person name="Russo S."/>
            <person name="Schroeder A.J."/>
            <person name="Shu S.Q."/>
            <person name="Stapleton M."/>
            <person name="Yamada C."/>
            <person name="Ashburner M."/>
            <person name="Gelbart W.M."/>
            <person name="Rubin G.M."/>
            <person name="Lewis S.E."/>
        </authorList>
    </citation>
    <scope>GENOME REANNOTATION</scope>
    <source>
        <strain>Berkeley</strain>
    </source>
</reference>
<reference key="3">
    <citation type="journal article" date="2002" name="Genome Biol.">
        <title>A Drosophila full-length cDNA resource.</title>
        <authorList>
            <person name="Stapleton M."/>
            <person name="Carlson J.W."/>
            <person name="Brokstein P."/>
            <person name="Yu C."/>
            <person name="Champe M."/>
            <person name="George R.A."/>
            <person name="Guarin H."/>
            <person name="Kronmiller B."/>
            <person name="Pacleb J.M."/>
            <person name="Park S."/>
            <person name="Wan K.H."/>
            <person name="Rubin G.M."/>
            <person name="Celniker S.E."/>
        </authorList>
    </citation>
    <scope>NUCLEOTIDE SEQUENCE [LARGE SCALE MRNA]</scope>
    <source>
        <strain>Berkeley</strain>
        <tissue>Embryo</tissue>
    </source>
</reference>
<feature type="chain" id="PRO_0000339223" description="Protein ST7 homolog">
    <location>
        <begin position="1"/>
        <end position="537"/>
    </location>
</feature>
<feature type="transmembrane region" description="Helical" evidence="1">
    <location>
        <begin position="15"/>
        <end position="35"/>
    </location>
</feature>
<feature type="transmembrane region" description="Helical" evidence="1">
    <location>
        <begin position="472"/>
        <end position="492"/>
    </location>
</feature>
<feature type="region of interest" description="Disordered" evidence="2">
    <location>
        <begin position="61"/>
        <end position="111"/>
    </location>
</feature>
<feature type="compositionally biased region" description="Low complexity" evidence="2">
    <location>
        <begin position="67"/>
        <end position="84"/>
    </location>
</feature>
<feature type="compositionally biased region" description="Gly residues" evidence="2">
    <location>
        <begin position="85"/>
        <end position="99"/>
    </location>
</feature>
<feature type="compositionally biased region" description="Low complexity" evidence="2">
    <location>
        <begin position="100"/>
        <end position="109"/>
    </location>
</feature>
<sequence>MWDSSMFLSTLTPKFYVALTGTSSLISGLILIFEWWYFRKYGTSFIEQVSINHISPWINGSDGQSESSNGSGSSSSSGSSSSSNGGAGGGGSGGAGASGSGSATTSTGTQMPECKVWRNPLNLFRGAEYQRFFWATSKEPLTYYDMNLSAQDHQTFFTCEGDARKEEYEIMQTAWRERNPMQRIKSAHSALEINAECAPAYILLAEEEAMTIMEAEKILKTALKVAEINYRKSQATQHQGAIADGMHRRDTNVLIYIKRRLAMCARKLGKLKEAAKMFRDLTKEIPSIMSVLNIHENLIETLLEMQAYADCHAILAKYDDISLPKSATICYTAALLKARAVADKFSPDIASKRGLSQAEMSAVEAIHRAVEFNPHVPKYLLETKRLILPPEHILKRGDSEALAYAFFHLKHWKQVEGALNLLHCTWEGTFRMLPYPLERGHLFYPYPTCTECADRELLPAFHEVSVYPKKELPFFILFTAGLCSITALLALATHQYPEPMGHLAQTVLTWISYPFQLLKERIEAFWPCNLLQQLSRV</sequence>
<dbReference type="EMBL" id="AE014296">
    <property type="protein sequence ID" value="AAF51644.1"/>
    <property type="molecule type" value="Genomic_DNA"/>
</dbReference>
<dbReference type="EMBL" id="AY071424">
    <property type="protein sequence ID" value="AAL49046.1"/>
    <property type="molecule type" value="mRNA"/>
</dbReference>
<dbReference type="RefSeq" id="NP_001262124.1">
    <property type="nucleotide sequence ID" value="NM_001275195.1"/>
</dbReference>
<dbReference type="RefSeq" id="NP_001262125.1">
    <property type="nucleotide sequence ID" value="NM_001275196.1"/>
</dbReference>
<dbReference type="RefSeq" id="NP_649260.1">
    <property type="nucleotide sequence ID" value="NM_141003.3"/>
</dbReference>
<dbReference type="SMR" id="Q9VPB1"/>
<dbReference type="FunCoup" id="Q9VPB1">
    <property type="interactions" value="1140"/>
</dbReference>
<dbReference type="IntAct" id="Q9VPB1">
    <property type="interactions" value="1"/>
</dbReference>
<dbReference type="STRING" id="7227.FBpp0077930"/>
<dbReference type="PaxDb" id="7227-FBpp0077930"/>
<dbReference type="DNASU" id="40301"/>
<dbReference type="EnsemblMetazoa" id="FBtr0078272">
    <property type="protein sequence ID" value="FBpp0077930"/>
    <property type="gene ID" value="FBgn0037026"/>
</dbReference>
<dbReference type="EnsemblMetazoa" id="FBtr0331528">
    <property type="protein sequence ID" value="FBpp0303918"/>
    <property type="gene ID" value="FBgn0037026"/>
</dbReference>
<dbReference type="EnsemblMetazoa" id="FBtr0331529">
    <property type="protein sequence ID" value="FBpp0303919"/>
    <property type="gene ID" value="FBgn0037026"/>
</dbReference>
<dbReference type="GeneID" id="40301"/>
<dbReference type="KEGG" id="dme:Dmel_CG3634"/>
<dbReference type="UCSC" id="CG3634-RA">
    <property type="organism name" value="d. melanogaster"/>
</dbReference>
<dbReference type="AGR" id="FB:FBgn0037026"/>
<dbReference type="FlyBase" id="FBgn0037026">
    <property type="gene designation" value="CG3634"/>
</dbReference>
<dbReference type="VEuPathDB" id="VectorBase:FBgn0037026"/>
<dbReference type="eggNOG" id="KOG3807">
    <property type="taxonomic scope" value="Eukaryota"/>
</dbReference>
<dbReference type="GeneTree" id="ENSGT00390000000873"/>
<dbReference type="HOGENOM" id="CLU_035578_2_0_1"/>
<dbReference type="InParanoid" id="Q9VPB1"/>
<dbReference type="OMA" id="YADCQTI"/>
<dbReference type="OrthoDB" id="5914722at2759"/>
<dbReference type="PhylomeDB" id="Q9VPB1"/>
<dbReference type="BioGRID-ORCS" id="40301">
    <property type="hits" value="0 hits in 3 CRISPR screens"/>
</dbReference>
<dbReference type="ChiTaRS" id="CG3634">
    <property type="organism name" value="fly"/>
</dbReference>
<dbReference type="GenomeRNAi" id="40301"/>
<dbReference type="PRO" id="PR:Q9VPB1"/>
<dbReference type="Proteomes" id="UP000000803">
    <property type="component" value="Chromosome 3L"/>
</dbReference>
<dbReference type="Bgee" id="FBgn0037026">
    <property type="expression patterns" value="Expressed in eye disc (Drosophila) and 34 other cell types or tissues"/>
</dbReference>
<dbReference type="ExpressionAtlas" id="Q9VPB1">
    <property type="expression patterns" value="baseline and differential"/>
</dbReference>
<dbReference type="GO" id="GO:0016020">
    <property type="term" value="C:membrane"/>
    <property type="evidence" value="ECO:0007669"/>
    <property type="project" value="UniProtKB-SubCell"/>
</dbReference>
<dbReference type="CDD" id="cd11557">
    <property type="entry name" value="ST7"/>
    <property type="match status" value="1"/>
</dbReference>
<dbReference type="InterPro" id="IPR007311">
    <property type="entry name" value="ST7"/>
</dbReference>
<dbReference type="PANTHER" id="PTHR12745:SF6">
    <property type="entry name" value="PROTEIN ST7 HOMOLOG"/>
    <property type="match status" value="1"/>
</dbReference>
<dbReference type="PANTHER" id="PTHR12745">
    <property type="entry name" value="SUPPRESSION OF TUMORIGENICITY 7"/>
    <property type="match status" value="1"/>
</dbReference>
<dbReference type="Pfam" id="PF04184">
    <property type="entry name" value="ST7"/>
    <property type="match status" value="1"/>
</dbReference>
<accession>Q9VPB1</accession>
<organism>
    <name type="scientific">Drosophila melanogaster</name>
    <name type="common">Fruit fly</name>
    <dbReference type="NCBI Taxonomy" id="7227"/>
    <lineage>
        <taxon>Eukaryota</taxon>
        <taxon>Metazoa</taxon>
        <taxon>Ecdysozoa</taxon>
        <taxon>Arthropoda</taxon>
        <taxon>Hexapoda</taxon>
        <taxon>Insecta</taxon>
        <taxon>Pterygota</taxon>
        <taxon>Neoptera</taxon>
        <taxon>Endopterygota</taxon>
        <taxon>Diptera</taxon>
        <taxon>Brachycera</taxon>
        <taxon>Muscomorpha</taxon>
        <taxon>Ephydroidea</taxon>
        <taxon>Drosophilidae</taxon>
        <taxon>Drosophila</taxon>
        <taxon>Sophophora</taxon>
    </lineage>
</organism>
<keyword id="KW-0472">Membrane</keyword>
<keyword id="KW-1185">Reference proteome</keyword>
<keyword id="KW-0812">Transmembrane</keyword>
<keyword id="KW-1133">Transmembrane helix</keyword>
<protein>
    <recommendedName>
        <fullName>Protein ST7 homolog</fullName>
    </recommendedName>
</protein>
<proteinExistence type="evidence at transcript level"/>
<name>ST7_DROME</name>